<dbReference type="EMBL" id="AF178947">
    <property type="protein sequence ID" value="AAG46056.1"/>
    <property type="molecule type" value="mRNA"/>
</dbReference>
<dbReference type="EMBL" id="AF192307">
    <property type="protein sequence ID" value="AAG46057.1"/>
    <property type="molecule type" value="Genomic_DNA"/>
</dbReference>
<dbReference type="EMBL" id="AF320561">
    <property type="protein sequence ID" value="AAK38078.1"/>
    <property type="molecule type" value="mRNA"/>
</dbReference>
<dbReference type="EMBL" id="AL078579">
    <property type="protein sequence ID" value="CAB43966.1"/>
    <property type="molecule type" value="Genomic_DNA"/>
</dbReference>
<dbReference type="EMBL" id="AL161571">
    <property type="protein sequence ID" value="CAB81427.1"/>
    <property type="molecule type" value="Genomic_DNA"/>
</dbReference>
<dbReference type="EMBL" id="CP002687">
    <property type="protein sequence ID" value="AEE85391.1"/>
    <property type="molecule type" value="Genomic_DNA"/>
</dbReference>
<dbReference type="EMBL" id="AY090256">
    <property type="protein sequence ID" value="AAL90917.1"/>
    <property type="molecule type" value="mRNA"/>
</dbReference>
<dbReference type="EMBL" id="AY122892">
    <property type="protein sequence ID" value="AAM67425.1"/>
    <property type="molecule type" value="mRNA"/>
</dbReference>
<dbReference type="EMBL" id="AY088510">
    <property type="protein sequence ID" value="AAM66045.1"/>
    <property type="molecule type" value="mRNA"/>
</dbReference>
<dbReference type="PIR" id="T09017">
    <property type="entry name" value="T09017"/>
</dbReference>
<dbReference type="RefSeq" id="NP_194507.1">
    <property type="nucleotide sequence ID" value="NM_118916.3"/>
</dbReference>
<dbReference type="SMR" id="Q9STP8"/>
<dbReference type="BioGRID" id="14178">
    <property type="interactions" value="5"/>
</dbReference>
<dbReference type="DIP" id="DIP-32848N"/>
<dbReference type="FunCoup" id="Q9STP8">
    <property type="interactions" value="3028"/>
</dbReference>
<dbReference type="IntAct" id="Q9STP8">
    <property type="interactions" value="6"/>
</dbReference>
<dbReference type="STRING" id="3702.Q9STP8"/>
<dbReference type="iPTMnet" id="Q9STP8"/>
<dbReference type="PaxDb" id="3702-AT4G27780.1"/>
<dbReference type="ProteomicsDB" id="244604"/>
<dbReference type="EnsemblPlants" id="AT4G27780.1">
    <property type="protein sequence ID" value="AT4G27780.1"/>
    <property type="gene ID" value="AT4G27780"/>
</dbReference>
<dbReference type="GeneID" id="828891"/>
<dbReference type="Gramene" id="AT4G27780.1">
    <property type="protein sequence ID" value="AT4G27780.1"/>
    <property type="gene ID" value="AT4G27780"/>
</dbReference>
<dbReference type="KEGG" id="ath:AT4G27780"/>
<dbReference type="Araport" id="AT4G27780"/>
<dbReference type="TAIR" id="AT4G27780">
    <property type="gene designation" value="ACBP2"/>
</dbReference>
<dbReference type="eggNOG" id="KOG0817">
    <property type="taxonomic scope" value="Eukaryota"/>
</dbReference>
<dbReference type="HOGENOM" id="CLU_050309_0_0_1"/>
<dbReference type="InParanoid" id="Q9STP8"/>
<dbReference type="OMA" id="WPWIRDS"/>
<dbReference type="PhylomeDB" id="Q9STP8"/>
<dbReference type="PRO" id="PR:Q9STP8"/>
<dbReference type="Proteomes" id="UP000006548">
    <property type="component" value="Chromosome 4"/>
</dbReference>
<dbReference type="ExpressionAtlas" id="Q9STP8">
    <property type="expression patterns" value="baseline and differential"/>
</dbReference>
<dbReference type="GO" id="GO:0005783">
    <property type="term" value="C:endoplasmic reticulum"/>
    <property type="evidence" value="ECO:0000314"/>
    <property type="project" value="TAIR"/>
</dbReference>
<dbReference type="GO" id="GO:0005789">
    <property type="term" value="C:endoplasmic reticulum membrane"/>
    <property type="evidence" value="ECO:0007669"/>
    <property type="project" value="UniProtKB-SubCell"/>
</dbReference>
<dbReference type="GO" id="GO:0009514">
    <property type="term" value="C:glyoxysome"/>
    <property type="evidence" value="ECO:0000314"/>
    <property type="project" value="UniProtKB"/>
</dbReference>
<dbReference type="GO" id="GO:0005778">
    <property type="term" value="C:peroxisomal membrane"/>
    <property type="evidence" value="ECO:0007669"/>
    <property type="project" value="UniProtKB-SubCell"/>
</dbReference>
<dbReference type="GO" id="GO:0005886">
    <property type="term" value="C:plasma membrane"/>
    <property type="evidence" value="ECO:0000314"/>
    <property type="project" value="UniProtKB"/>
</dbReference>
<dbReference type="GO" id="GO:0000062">
    <property type="term" value="F:fatty-acyl-CoA binding"/>
    <property type="evidence" value="ECO:0000314"/>
    <property type="project" value="UniProtKB"/>
</dbReference>
<dbReference type="GO" id="GO:0032791">
    <property type="term" value="F:lead ion binding"/>
    <property type="evidence" value="ECO:0000314"/>
    <property type="project" value="TAIR"/>
</dbReference>
<dbReference type="GO" id="GO:0006869">
    <property type="term" value="P:lipid transport"/>
    <property type="evidence" value="ECO:0000304"/>
    <property type="project" value="TAIR"/>
</dbReference>
<dbReference type="GO" id="GO:0001666">
    <property type="term" value="P:response to hypoxia"/>
    <property type="evidence" value="ECO:0000270"/>
    <property type="project" value="TAIR"/>
</dbReference>
<dbReference type="GO" id="GO:0010288">
    <property type="term" value="P:response to lead ion"/>
    <property type="evidence" value="ECO:0000270"/>
    <property type="project" value="UniProtKB"/>
</dbReference>
<dbReference type="FunFam" id="1.20.80.10:FF:000040">
    <property type="entry name" value="Acyl-CoA-binding domain-containing protein 2"/>
    <property type="match status" value="1"/>
</dbReference>
<dbReference type="FunFam" id="1.25.40.20:FF:000632">
    <property type="entry name" value="Acyl-CoA-binding domain-containing protein 2"/>
    <property type="match status" value="1"/>
</dbReference>
<dbReference type="Gene3D" id="1.20.80.10">
    <property type="match status" value="1"/>
</dbReference>
<dbReference type="Gene3D" id="1.25.40.20">
    <property type="entry name" value="Ankyrin repeat-containing domain"/>
    <property type="match status" value="1"/>
</dbReference>
<dbReference type="InterPro" id="IPR000582">
    <property type="entry name" value="Acyl-CoA-binding_protein"/>
</dbReference>
<dbReference type="InterPro" id="IPR035984">
    <property type="entry name" value="Acyl-CoA-binding_sf"/>
</dbReference>
<dbReference type="InterPro" id="IPR002110">
    <property type="entry name" value="Ankyrin_rpt"/>
</dbReference>
<dbReference type="InterPro" id="IPR036770">
    <property type="entry name" value="Ankyrin_rpt-contain_sf"/>
</dbReference>
<dbReference type="InterPro" id="IPR014352">
    <property type="entry name" value="FERM/acyl-CoA-bd_prot_sf"/>
</dbReference>
<dbReference type="PANTHER" id="PTHR24119:SF4">
    <property type="entry name" value="ACYL-COA-BINDING DOMAIN-CONTAINING PROTEIN 2"/>
    <property type="match status" value="1"/>
</dbReference>
<dbReference type="PANTHER" id="PTHR24119">
    <property type="entry name" value="ACYL-COA-BINDING DOMAIN-CONTAINING PROTEIN 6"/>
    <property type="match status" value="1"/>
</dbReference>
<dbReference type="Pfam" id="PF00887">
    <property type="entry name" value="ACBP"/>
    <property type="match status" value="1"/>
</dbReference>
<dbReference type="Pfam" id="PF12796">
    <property type="entry name" value="Ank_2"/>
    <property type="match status" value="1"/>
</dbReference>
<dbReference type="PRINTS" id="PR00689">
    <property type="entry name" value="ACOABINDINGP"/>
</dbReference>
<dbReference type="PRINTS" id="PR01415">
    <property type="entry name" value="ANKYRIN"/>
</dbReference>
<dbReference type="SMART" id="SM00248">
    <property type="entry name" value="ANK"/>
    <property type="match status" value="2"/>
</dbReference>
<dbReference type="SUPFAM" id="SSF47027">
    <property type="entry name" value="Acyl-CoA binding protein"/>
    <property type="match status" value="1"/>
</dbReference>
<dbReference type="SUPFAM" id="SSF48403">
    <property type="entry name" value="Ankyrin repeat"/>
    <property type="match status" value="1"/>
</dbReference>
<dbReference type="PROSITE" id="PS51228">
    <property type="entry name" value="ACB_2"/>
    <property type="match status" value="1"/>
</dbReference>
<dbReference type="PROSITE" id="PS50297">
    <property type="entry name" value="ANK_REP_REGION"/>
    <property type="match status" value="1"/>
</dbReference>
<dbReference type="PROSITE" id="PS50088">
    <property type="entry name" value="ANK_REPEAT"/>
    <property type="match status" value="2"/>
</dbReference>
<sequence length="354" mass="38480">MGDWAQLAQSVILGLIFSYLLAKLISIVVTFKEDNLSLTRHPEESQLEIKPEGVDSRRLDSSCGGFGGEADSLVAEQGSSRSDSVAGDDSEEDDDWEGVESTELDEAFSAATLFVTTAAADRLSQKVPSDVQQQLYGLYKIATEGPCTAPQPSALKMTARAKWQAWQKLGAMPPEEAMEKYIEIVTQLYPTWLDGGVKAGSRGGDDAASNSRGTMGPVFSSLVYDEESENELKIDAIHGFAREGEVENLLKSIESGIPVNARDSEGRTPLHWAIDRGHLNIAKVLVDKNADVNAKDNEGQTPLHYAVVCDREAIAEFLVKQNANTAAKDEDGNSPLDLCESDWPWIRDSAKQAD</sequence>
<protein>
    <recommendedName>
        <fullName>Acyl-CoA-binding domain-containing protein 2</fullName>
        <shortName>Acyl-CoA binding protein 2</shortName>
    </recommendedName>
</protein>
<organism>
    <name type="scientific">Arabidopsis thaliana</name>
    <name type="common">Mouse-ear cress</name>
    <dbReference type="NCBI Taxonomy" id="3702"/>
    <lineage>
        <taxon>Eukaryota</taxon>
        <taxon>Viridiplantae</taxon>
        <taxon>Streptophyta</taxon>
        <taxon>Embryophyta</taxon>
        <taxon>Tracheophyta</taxon>
        <taxon>Spermatophyta</taxon>
        <taxon>Magnoliopsida</taxon>
        <taxon>eudicotyledons</taxon>
        <taxon>Gunneridae</taxon>
        <taxon>Pentapetalae</taxon>
        <taxon>rosids</taxon>
        <taxon>malvids</taxon>
        <taxon>Brassicales</taxon>
        <taxon>Brassicaceae</taxon>
        <taxon>Camelineae</taxon>
        <taxon>Arabidopsis</taxon>
    </lineage>
</organism>
<keyword id="KW-0040">ANK repeat</keyword>
<keyword id="KW-1003">Cell membrane</keyword>
<keyword id="KW-0256">Endoplasmic reticulum</keyword>
<keyword id="KW-1027">Lead</keyword>
<keyword id="KW-0446">Lipid-binding</keyword>
<keyword id="KW-0472">Membrane</keyword>
<keyword id="KW-0479">Metal-binding</keyword>
<keyword id="KW-0576">Peroxisome</keyword>
<keyword id="KW-1185">Reference proteome</keyword>
<keyword id="KW-0677">Repeat</keyword>
<keyword id="KW-0735">Signal-anchor</keyword>
<keyword id="KW-0812">Transmembrane</keyword>
<keyword id="KW-1133">Transmembrane helix</keyword>
<keyword id="KW-0813">Transport</keyword>
<feature type="chain" id="PRO_0000379901" description="Acyl-CoA-binding domain-containing protein 2">
    <location>
        <begin position="1"/>
        <end position="354"/>
    </location>
</feature>
<feature type="transmembrane region" description="Helical; Signal-anchor" evidence="1">
    <location>
        <begin position="11"/>
        <end position="31"/>
    </location>
</feature>
<feature type="domain" description="ACB" evidence="2">
    <location>
        <begin position="104"/>
        <end position="194"/>
    </location>
</feature>
<feature type="repeat" description="ANK 1">
    <location>
        <begin position="265"/>
        <end position="294"/>
    </location>
</feature>
<feature type="repeat" description="ANK 2">
    <location>
        <begin position="298"/>
        <end position="327"/>
    </location>
</feature>
<feature type="region of interest" description="Disordered" evidence="3">
    <location>
        <begin position="75"/>
        <end position="96"/>
    </location>
</feature>
<feature type="compositionally biased region" description="Acidic residues" evidence="3">
    <location>
        <begin position="86"/>
        <end position="96"/>
    </location>
</feature>
<feature type="binding site" evidence="4">
    <location>
        <begin position="136"/>
        <end position="140"/>
    </location>
    <ligand>
        <name>an acyl-CoA</name>
        <dbReference type="ChEBI" id="CHEBI:58342"/>
    </ligand>
</feature>
<feature type="binding site" evidence="4">
    <location>
        <position position="162"/>
    </location>
    <ligand>
        <name>an acyl-CoA</name>
        <dbReference type="ChEBI" id="CHEBI:58342"/>
    </ligand>
</feature>
<feature type="binding site" evidence="4">
    <location>
        <position position="181"/>
    </location>
    <ligand>
        <name>an acyl-CoA</name>
        <dbReference type="ChEBI" id="CHEBI:58342"/>
    </ligand>
</feature>
<feature type="mutagenesis site" description="Loss of palmitoyl-CoA-binding activity." evidence="4">
    <original>Y</original>
    <variation>A</variation>
    <location>
        <position position="136"/>
    </location>
</feature>
<feature type="mutagenesis site" description="Loss of palmitoyl-CoA-binding activity." evidence="4">
    <original>K</original>
    <variation>A</variation>
    <location>
        <position position="140"/>
    </location>
</feature>
<feature type="mutagenesis site" description="Slight increase of palmitoyl-CoA-binding activity." evidence="6">
    <original>A</original>
    <variation>D</variation>
    <location>
        <position position="142"/>
    </location>
</feature>
<feature type="mutagenesis site" description="Normal palmitoyl-CoA-binding activity." evidence="6">
    <original>G</original>
    <variation>A</variation>
    <location>
        <position position="145"/>
    </location>
</feature>
<feature type="mutagenesis site" description="Slight increase of palmitoyl-CoA-binding activity." evidence="6">
    <original>P</original>
    <variation>A</variation>
    <location>
        <position position="152"/>
    </location>
</feature>
<feature type="mutagenesis site" description="Loss of palmitoyl-CoA-binding activity." evidence="4">
    <original>K</original>
    <variation>A</variation>
    <location>
        <position position="162"/>
    </location>
</feature>
<feature type="mutagenesis site" description="Normal palmitoyl-CoA-binding activity." evidence="6">
    <original>W</original>
    <variation>A</variation>
    <location>
        <position position="163"/>
    </location>
</feature>
<feature type="mutagenesis site" description="Slight increase of palmitoyl-CoA-binding activity." evidence="6">
    <original>W</original>
    <variation>A</variation>
    <location>
        <position position="166"/>
    </location>
</feature>
<feature type="mutagenesis site" description="Slight increase of palmitoyl-CoA-binding activity." evidence="6">
    <original>A</original>
    <variation>S</variation>
    <location>
        <position position="177"/>
    </location>
</feature>
<feature type="mutagenesis site" description="Loss of palmitoyl-CoA-binding activity." evidence="4">
    <original>Y</original>
    <variation>A</variation>
    <location>
        <position position="181"/>
    </location>
</feature>
<evidence type="ECO:0000255" key="1"/>
<evidence type="ECO:0000255" key="2">
    <source>
        <dbReference type="PROSITE-ProRule" id="PRU00573"/>
    </source>
</evidence>
<evidence type="ECO:0000256" key="3">
    <source>
        <dbReference type="SAM" id="MobiDB-lite"/>
    </source>
</evidence>
<evidence type="ECO:0000269" key="4">
    <source>
    </source>
</evidence>
<evidence type="ECO:0000269" key="5">
    <source>
    </source>
</evidence>
<evidence type="ECO:0000269" key="6">
    <source>
    </source>
</evidence>
<evidence type="ECO:0000269" key="7">
    <source>
    </source>
</evidence>
<evidence type="ECO:0000269" key="8">
    <source>
    </source>
</evidence>
<evidence type="ECO:0000269" key="9">
    <source>
    </source>
</evidence>
<evidence type="ECO:0000269" key="10">
    <source>
    </source>
</evidence>
<evidence type="ECO:0000269" key="11">
    <source ref="2"/>
</evidence>
<evidence type="ECO:0000305" key="12"/>
<comment type="function">
    <text evidence="4 6 7 11">Binds medium- and long-chain acyl-CoA esters with very high affinity. Can interact in vitro with palmitoyl-CoA, but not with oleoyl-CoA. Binds to lead ions (Pb). May function as an intracellular carrier of acyl-CoA esters. Required for proper phospholipid and, to a lower extent, galactolipid composition.</text>
</comment>
<comment type="subunit">
    <text evidence="5 8 9 10">Interacts (via ankyrin repeats) with HIPP26 and the ethylene-responsive element-binding proteins RAP2-3/EBP and RAP2-12. Interacts with CSE.</text>
</comment>
<comment type="interaction">
    <interactant intactId="EBI-368234">
        <id>Q9STP8</id>
    </interactant>
    <interactant intactId="EBI-2008207">
        <id>Q9SZN7</id>
        <label>HIPP26</label>
    </interactant>
    <organismsDiffer>false</organismsDiffer>
    <experiments>5</experiments>
</comment>
<comment type="interaction">
    <interactant intactId="EBI-368234">
        <id>Q9STP8</id>
    </interactant>
    <interactant intactId="EBI-4441057">
        <id>Q9SSA8</id>
        <label>RAP2-12</label>
    </interactant>
    <organismsDiffer>false</organismsDiffer>
    <experiments>3</experiments>
</comment>
<comment type="interaction">
    <interactant intactId="EBI-368234">
        <id>Q9STP8</id>
    </interactant>
    <interactant intactId="EBI-368243">
        <id>P42736</id>
        <label>RAP2-3</label>
    </interactant>
    <organismsDiffer>false</organismsDiffer>
    <experiments>3</experiments>
</comment>
<comment type="subcellular location">
    <subcellularLocation>
        <location>Cell membrane</location>
        <topology>Single-pass membrane protein</topology>
    </subcellularLocation>
    <subcellularLocation>
        <location>Endoplasmic reticulum membrane</location>
        <topology>Single-pass membrane protein</topology>
    </subcellularLocation>
    <subcellularLocation>
        <location>Peroxisome membrane</location>
        <topology>Single-pass membrane protein</topology>
    </subcellularLocation>
</comment>
<comment type="tissue specificity">
    <text evidence="4 11">Mostly expressed in roots and flowers, and, to a lower extent, in stems, pods and leaves (at protein level).</text>
</comment>
<comment type="induction">
    <text evidence="7">In roots by lead.</text>
</comment>
<comment type="similarity">
    <text evidence="12">Belongs to the ACBP family.</text>
</comment>
<accession>Q9STP8</accession>
<accession>Q9FR48</accession>
<reference key="1">
    <citation type="journal article" date="2000" name="Plant Mol. Biol.">
        <title>Single amino acid substitutions at the acyl-CoA-binding domain interrupt 14[C]palmitoyl-CoA binding of ACBP2, an Arabidopsis acyl-CoA-binding protein with ankyrin repeats.</title>
        <authorList>
            <person name="Chye M.-L."/>
            <person name="Li H.-Y."/>
            <person name="Yung M.-H."/>
        </authorList>
    </citation>
    <scope>NUCLEOTIDE SEQUENCE [GENOMIC DNA / MRNA]</scope>
    <scope>FUNCTION</scope>
    <scope>MUTAGENESIS OF TYR-136; LYS-140; LYS-162 AND TYR-181</scope>
    <scope>TISSUE SPECIFICITY</scope>
    <source>
        <strain>cv. C24</strain>
        <strain>cv. Columbia</strain>
        <tissue>Flower</tissue>
    </source>
</reference>
<reference key="2">
    <citation type="journal article" date="2007" name="Plant Sci.">
        <title>The effects of down-regulating expression of Arabidopsis thaliana membrane-associated acyl-CoA binding protein 2 on acyl-lipid composition.</title>
        <authorList>
            <person name="Kojima M."/>
            <person name="Casteel J."/>
            <person name="Miernyk J.A."/>
            <person name="Thelen J.J."/>
        </authorList>
        <dbReference type="AGRICOLA" id="IND43855808"/>
    </citation>
    <scope>NUCLEOTIDE SEQUENCE [MRNA]</scope>
    <scope>FUNCTION</scope>
    <scope>TISSUE SPECIFICITY</scope>
    <scope>IDENTIFICATION BY MASS SPECTROMETRY</scope>
</reference>
<reference key="3">
    <citation type="journal article" date="1999" name="Nature">
        <title>Sequence and analysis of chromosome 4 of the plant Arabidopsis thaliana.</title>
        <authorList>
            <person name="Mayer K.F.X."/>
            <person name="Schueller C."/>
            <person name="Wambutt R."/>
            <person name="Murphy G."/>
            <person name="Volckaert G."/>
            <person name="Pohl T."/>
            <person name="Duesterhoeft A."/>
            <person name="Stiekema W."/>
            <person name="Entian K.-D."/>
            <person name="Terryn N."/>
            <person name="Harris B."/>
            <person name="Ansorge W."/>
            <person name="Brandt P."/>
            <person name="Grivell L.A."/>
            <person name="Rieger M."/>
            <person name="Weichselgartner M."/>
            <person name="de Simone V."/>
            <person name="Obermaier B."/>
            <person name="Mache R."/>
            <person name="Mueller M."/>
            <person name="Kreis M."/>
            <person name="Delseny M."/>
            <person name="Puigdomenech P."/>
            <person name="Watson M."/>
            <person name="Schmidtheini T."/>
            <person name="Reichert B."/>
            <person name="Portetelle D."/>
            <person name="Perez-Alonso M."/>
            <person name="Boutry M."/>
            <person name="Bancroft I."/>
            <person name="Vos P."/>
            <person name="Hoheisel J."/>
            <person name="Zimmermann W."/>
            <person name="Wedler H."/>
            <person name="Ridley P."/>
            <person name="Langham S.-A."/>
            <person name="McCullagh B."/>
            <person name="Bilham L."/>
            <person name="Robben J."/>
            <person name="van der Schueren J."/>
            <person name="Grymonprez B."/>
            <person name="Chuang Y.-J."/>
            <person name="Vandenbussche F."/>
            <person name="Braeken M."/>
            <person name="Weltjens I."/>
            <person name="Voet M."/>
            <person name="Bastiaens I."/>
            <person name="Aert R."/>
            <person name="Defoor E."/>
            <person name="Weitzenegger T."/>
            <person name="Bothe G."/>
            <person name="Ramsperger U."/>
            <person name="Hilbert H."/>
            <person name="Braun M."/>
            <person name="Holzer E."/>
            <person name="Brandt A."/>
            <person name="Peters S."/>
            <person name="van Staveren M."/>
            <person name="Dirkse W."/>
            <person name="Mooijman P."/>
            <person name="Klein Lankhorst R."/>
            <person name="Rose M."/>
            <person name="Hauf J."/>
            <person name="Koetter P."/>
            <person name="Berneiser S."/>
            <person name="Hempel S."/>
            <person name="Feldpausch M."/>
            <person name="Lamberth S."/>
            <person name="Van den Daele H."/>
            <person name="De Keyser A."/>
            <person name="Buysshaert C."/>
            <person name="Gielen J."/>
            <person name="Villarroel R."/>
            <person name="De Clercq R."/>
            <person name="van Montagu M."/>
            <person name="Rogers J."/>
            <person name="Cronin A."/>
            <person name="Quail M.A."/>
            <person name="Bray-Allen S."/>
            <person name="Clark L."/>
            <person name="Doggett J."/>
            <person name="Hall S."/>
            <person name="Kay M."/>
            <person name="Lennard N."/>
            <person name="McLay K."/>
            <person name="Mayes R."/>
            <person name="Pettett A."/>
            <person name="Rajandream M.A."/>
            <person name="Lyne M."/>
            <person name="Benes V."/>
            <person name="Rechmann S."/>
            <person name="Borkova D."/>
            <person name="Bloecker H."/>
            <person name="Scharfe M."/>
            <person name="Grimm M."/>
            <person name="Loehnert T.-H."/>
            <person name="Dose S."/>
            <person name="de Haan M."/>
            <person name="Maarse A.C."/>
            <person name="Schaefer M."/>
            <person name="Mueller-Auer S."/>
            <person name="Gabel C."/>
            <person name="Fuchs M."/>
            <person name="Fartmann B."/>
            <person name="Granderath K."/>
            <person name="Dauner D."/>
            <person name="Herzl A."/>
            <person name="Neumann S."/>
            <person name="Argiriou A."/>
            <person name="Vitale D."/>
            <person name="Liguori R."/>
            <person name="Piravandi E."/>
            <person name="Massenet O."/>
            <person name="Quigley F."/>
            <person name="Clabauld G."/>
            <person name="Muendlein A."/>
            <person name="Felber R."/>
            <person name="Schnabl S."/>
            <person name="Hiller R."/>
            <person name="Schmidt W."/>
            <person name="Lecharny A."/>
            <person name="Aubourg S."/>
            <person name="Chefdor F."/>
            <person name="Cooke R."/>
            <person name="Berger C."/>
            <person name="Monfort A."/>
            <person name="Casacuberta E."/>
            <person name="Gibbons T."/>
            <person name="Weber N."/>
            <person name="Vandenbol M."/>
            <person name="Bargues M."/>
            <person name="Terol J."/>
            <person name="Torres A."/>
            <person name="Perez-Perez A."/>
            <person name="Purnelle B."/>
            <person name="Bent E."/>
            <person name="Johnson S."/>
            <person name="Tacon D."/>
            <person name="Jesse T."/>
            <person name="Heijnen L."/>
            <person name="Schwarz S."/>
            <person name="Scholler P."/>
            <person name="Heber S."/>
            <person name="Francs P."/>
            <person name="Bielke C."/>
            <person name="Frishman D."/>
            <person name="Haase D."/>
            <person name="Lemcke K."/>
            <person name="Mewes H.-W."/>
            <person name="Stocker S."/>
            <person name="Zaccaria P."/>
            <person name="Bevan M."/>
            <person name="Wilson R.K."/>
            <person name="de la Bastide M."/>
            <person name="Habermann K."/>
            <person name="Parnell L."/>
            <person name="Dedhia N."/>
            <person name="Gnoj L."/>
            <person name="Schutz K."/>
            <person name="Huang E."/>
            <person name="Spiegel L."/>
            <person name="Sekhon M."/>
            <person name="Murray J."/>
            <person name="Sheet P."/>
            <person name="Cordes M."/>
            <person name="Abu-Threideh J."/>
            <person name="Stoneking T."/>
            <person name="Kalicki J."/>
            <person name="Graves T."/>
            <person name="Harmon G."/>
            <person name="Edwards J."/>
            <person name="Latreille P."/>
            <person name="Courtney L."/>
            <person name="Cloud J."/>
            <person name="Abbott A."/>
            <person name="Scott K."/>
            <person name="Johnson D."/>
            <person name="Minx P."/>
            <person name="Bentley D."/>
            <person name="Fulton B."/>
            <person name="Miller N."/>
            <person name="Greco T."/>
            <person name="Kemp K."/>
            <person name="Kramer J."/>
            <person name="Fulton L."/>
            <person name="Mardis E."/>
            <person name="Dante M."/>
            <person name="Pepin K."/>
            <person name="Hillier L.W."/>
            <person name="Nelson J."/>
            <person name="Spieth J."/>
            <person name="Ryan E."/>
            <person name="Andrews S."/>
            <person name="Geisel C."/>
            <person name="Layman D."/>
            <person name="Du H."/>
            <person name="Ali J."/>
            <person name="Berghoff A."/>
            <person name="Jones K."/>
            <person name="Drone K."/>
            <person name="Cotton M."/>
            <person name="Joshu C."/>
            <person name="Antonoiu B."/>
            <person name="Zidanic M."/>
            <person name="Strong C."/>
            <person name="Sun H."/>
            <person name="Lamar B."/>
            <person name="Yordan C."/>
            <person name="Ma P."/>
            <person name="Zhong J."/>
            <person name="Preston R."/>
            <person name="Vil D."/>
            <person name="Shekher M."/>
            <person name="Matero A."/>
            <person name="Shah R."/>
            <person name="Swaby I.K."/>
            <person name="O'Shaughnessy A."/>
            <person name="Rodriguez M."/>
            <person name="Hoffman J."/>
            <person name="Till S."/>
            <person name="Granat S."/>
            <person name="Shohdy N."/>
            <person name="Hasegawa A."/>
            <person name="Hameed A."/>
            <person name="Lodhi M."/>
            <person name="Johnson A."/>
            <person name="Chen E."/>
            <person name="Marra M.A."/>
            <person name="Martienssen R."/>
            <person name="McCombie W.R."/>
        </authorList>
    </citation>
    <scope>NUCLEOTIDE SEQUENCE [LARGE SCALE GENOMIC DNA]</scope>
    <source>
        <strain>cv. Columbia</strain>
    </source>
</reference>
<reference key="4">
    <citation type="journal article" date="2017" name="Plant J.">
        <title>Araport11: a complete reannotation of the Arabidopsis thaliana reference genome.</title>
        <authorList>
            <person name="Cheng C.Y."/>
            <person name="Krishnakumar V."/>
            <person name="Chan A.P."/>
            <person name="Thibaud-Nissen F."/>
            <person name="Schobel S."/>
            <person name="Town C.D."/>
        </authorList>
    </citation>
    <scope>GENOME REANNOTATION</scope>
    <source>
        <strain>cv. Columbia</strain>
    </source>
</reference>
<reference key="5">
    <citation type="journal article" date="2003" name="Science">
        <title>Empirical analysis of transcriptional activity in the Arabidopsis genome.</title>
        <authorList>
            <person name="Yamada K."/>
            <person name="Lim J."/>
            <person name="Dale J.M."/>
            <person name="Chen H."/>
            <person name="Shinn P."/>
            <person name="Palm C.J."/>
            <person name="Southwick A.M."/>
            <person name="Wu H.C."/>
            <person name="Kim C.J."/>
            <person name="Nguyen M."/>
            <person name="Pham P.K."/>
            <person name="Cheuk R.F."/>
            <person name="Karlin-Newmann G."/>
            <person name="Liu S.X."/>
            <person name="Lam B."/>
            <person name="Sakano H."/>
            <person name="Wu T."/>
            <person name="Yu G."/>
            <person name="Miranda M."/>
            <person name="Quach H.L."/>
            <person name="Tripp M."/>
            <person name="Chang C.H."/>
            <person name="Lee J.M."/>
            <person name="Toriumi M.J."/>
            <person name="Chan M.M."/>
            <person name="Tang C.C."/>
            <person name="Onodera C.S."/>
            <person name="Deng J.M."/>
            <person name="Akiyama K."/>
            <person name="Ansari Y."/>
            <person name="Arakawa T."/>
            <person name="Banh J."/>
            <person name="Banno F."/>
            <person name="Bowser L."/>
            <person name="Brooks S.Y."/>
            <person name="Carninci P."/>
            <person name="Chao Q."/>
            <person name="Choy N."/>
            <person name="Enju A."/>
            <person name="Goldsmith A.D."/>
            <person name="Gurjal M."/>
            <person name="Hansen N.F."/>
            <person name="Hayashizaki Y."/>
            <person name="Johnson-Hopson C."/>
            <person name="Hsuan V.W."/>
            <person name="Iida K."/>
            <person name="Karnes M."/>
            <person name="Khan S."/>
            <person name="Koesema E."/>
            <person name="Ishida J."/>
            <person name="Jiang P.X."/>
            <person name="Jones T."/>
            <person name="Kawai J."/>
            <person name="Kamiya A."/>
            <person name="Meyers C."/>
            <person name="Nakajima M."/>
            <person name="Narusaka M."/>
            <person name="Seki M."/>
            <person name="Sakurai T."/>
            <person name="Satou M."/>
            <person name="Tamse R."/>
            <person name="Vaysberg M."/>
            <person name="Wallender E.K."/>
            <person name="Wong C."/>
            <person name="Yamamura Y."/>
            <person name="Yuan S."/>
            <person name="Shinozaki K."/>
            <person name="Davis R.W."/>
            <person name="Theologis A."/>
            <person name="Ecker J.R."/>
        </authorList>
    </citation>
    <scope>NUCLEOTIDE SEQUENCE [LARGE SCALE MRNA]</scope>
    <source>
        <strain>cv. Columbia</strain>
    </source>
</reference>
<reference key="6">
    <citation type="submission" date="2002-03" db="EMBL/GenBank/DDBJ databases">
        <title>Full-length cDNA from Arabidopsis thaliana.</title>
        <authorList>
            <person name="Brover V.V."/>
            <person name="Troukhan M.E."/>
            <person name="Alexandrov N.A."/>
            <person name="Lu Y.-P."/>
            <person name="Flavell R.B."/>
            <person name="Feldmann K.A."/>
        </authorList>
    </citation>
    <scope>NUCLEOTIDE SEQUENCE [LARGE SCALE MRNA]</scope>
</reference>
<reference key="7">
    <citation type="journal article" date="2003" name="Plant Cell Physiol.">
        <title>Novel glyoxysomal protein kinase, GPK1, identified by proteomic analysis of glyoxysomes in etiolated cotyledons of Arabidopsis thaliana.</title>
        <authorList>
            <person name="Fukao Y."/>
            <person name="Hayashi M."/>
            <person name="Hara-Nishimura I."/>
            <person name="Nishimura M."/>
        </authorList>
    </citation>
    <scope>SUBCELLULAR LOCATION</scope>
    <scope>IDENTIFICATION BY MASS SPECTROMETRY</scope>
</reference>
<reference key="8">
    <citation type="journal article" date="2003" name="Plant Mol. Biol.">
        <title>Membrane localization of Arabidopsis acyl-CoA binding protein ACBP2.</title>
        <authorList>
            <person name="Li H.-Y."/>
            <person name="Chye M.-L."/>
        </authorList>
    </citation>
    <scope>SUBCELLULAR LOCATION</scope>
    <scope>SIGNAL-ANCHOR</scope>
</reference>
<reference key="9">
    <citation type="journal article" date="2004" name="Plant Mol. Biol.">
        <title>Arabidopsis Acyl-CoA-binding protein ACBP2 interacts with an ethylene-responsive element-binding protein, AtEBP, via its ankyrin repeats.</title>
        <authorList>
            <person name="Li H.-Y."/>
            <person name="Chye M.-L."/>
        </authorList>
    </citation>
    <scope>SUBCELLULAR LOCATION</scope>
    <scope>INTERACTION WITH EBP</scope>
</reference>
<reference key="10">
    <citation type="journal article" date="2004" name="Plant Mol. Biol.">
        <title>ACBP4 and ACBP5, novel Arabidopsis acyl-CoA-binding proteins with kelch motifs that bind oleoyl-CoA.</title>
        <authorList>
            <person name="Leung K.-C."/>
            <person name="Li H.-Y."/>
            <person name="Mishra G."/>
            <person name="Chye M.-L."/>
        </authorList>
    </citation>
    <scope>FUNCTION</scope>
    <scope>MUTAGENESIS OF ALA-142; GLY-145; PRO-152; TRP-163; TRP-166 AND ALA-177</scope>
</reference>
<reference key="11">
    <citation type="journal article" date="2008" name="Plant J.">
        <title>Overexpression of membrane-associated acyl-CoA-binding protein ACBP1 enhances lead tolerance in Arabidopsis.</title>
        <authorList>
            <person name="Xiao S."/>
            <person name="Gao W."/>
            <person name="Chen Q.-F."/>
            <person name="Ramalingam S."/>
            <person name="Chye M.-L."/>
        </authorList>
    </citation>
    <scope>FUNCTION</scope>
    <scope>INDUCTION BY LEAD</scope>
</reference>
<reference key="12">
    <citation type="journal article" date="2009" name="New Phytol.">
        <title>Arabidopsis thaliana acyl-CoA-binding protein ACBP2 interacts with heavy-metal-binding farnesylated protein AtFP6.</title>
        <authorList>
            <person name="Gao W."/>
            <person name="Xiao S."/>
            <person name="Li H.Y."/>
            <person name="Tsao S.W."/>
            <person name="Chye M.L."/>
        </authorList>
    </citation>
    <scope>INTERACTION WITH HIPP26</scope>
</reference>
<reference key="13">
    <citation type="journal article" date="2009" name="Plant Physiol. Biochem.">
        <title>An Arabidopsis family of six acyl-CoA-binding proteins has three cytosolic members.</title>
        <authorList>
            <person name="Xiao S."/>
            <person name="Chye M.-L."/>
        </authorList>
    </citation>
    <scope>GENE FAMILY</scope>
    <scope>NOMENCLATURE</scope>
</reference>
<reference key="14">
    <citation type="journal article" date="2010" name="Plant J.">
        <title>Acyl-CoA-binding protein 2 binds lysophospholipase 2 and lysoPC to promote tolerance to cadmium-induced oxidative stress in transgenic Arabidopsis.</title>
        <authorList>
            <person name="Gao W."/>
            <person name="Li H.Y."/>
            <person name="Xiao S."/>
            <person name="Chye M.L."/>
        </authorList>
    </citation>
    <scope>INTERACTION WITH CSE</scope>
    <scope>SUBCELLULAR LOCATION</scope>
</reference>
<reference key="15">
    <citation type="journal article" date="2011" name="Nature">
        <title>Oxygen sensing in plants is mediated by an N-end rule pathway for protein destabilization.</title>
        <authorList>
            <person name="Licausi F."/>
            <person name="Kosmacz M."/>
            <person name="Weits D.A."/>
            <person name="Giuntoli B."/>
            <person name="Giorgi F.M."/>
            <person name="Voesenek L.A."/>
            <person name="Perata P."/>
            <person name="van Dongen J.T."/>
        </authorList>
    </citation>
    <scope>INTERACTION WITH RAP2-12</scope>
</reference>
<gene>
    <name type="primary">ACBP2</name>
    <name type="ordered locus">At4g27780</name>
    <name type="ORF">T27E11.20</name>
</gene>
<name>ACBP2_ARATH</name>
<proteinExistence type="evidence at protein level"/>